<proteinExistence type="inferred from homology"/>
<dbReference type="EMBL" id="CU459141">
    <property type="protein sequence ID" value="CAM86487.1"/>
    <property type="molecule type" value="Genomic_DNA"/>
</dbReference>
<dbReference type="RefSeq" id="WP_000344169.1">
    <property type="nucleotide sequence ID" value="NZ_JBDGFB010000016.1"/>
</dbReference>
<dbReference type="SMR" id="B0V6E0"/>
<dbReference type="EnsemblBacteria" id="CAM86487">
    <property type="protein sequence ID" value="CAM86487"/>
    <property type="gene ID" value="ABAYE1590"/>
</dbReference>
<dbReference type="GeneID" id="92894223"/>
<dbReference type="KEGG" id="aby:ABAYE1590"/>
<dbReference type="HOGENOM" id="CLU_040469_3_2_6"/>
<dbReference type="GO" id="GO:0005829">
    <property type="term" value="C:cytosol"/>
    <property type="evidence" value="ECO:0007669"/>
    <property type="project" value="TreeGrafter"/>
</dbReference>
<dbReference type="GO" id="GO:0005524">
    <property type="term" value="F:ATP binding"/>
    <property type="evidence" value="ECO:0007669"/>
    <property type="project" value="UniProtKB-UniRule"/>
</dbReference>
<dbReference type="GO" id="GO:0016887">
    <property type="term" value="F:ATP hydrolysis activity"/>
    <property type="evidence" value="ECO:0007669"/>
    <property type="project" value="InterPro"/>
</dbReference>
<dbReference type="GO" id="GO:0140664">
    <property type="term" value="F:ATP-dependent DNA damage sensor activity"/>
    <property type="evidence" value="ECO:0007669"/>
    <property type="project" value="InterPro"/>
</dbReference>
<dbReference type="GO" id="GO:0003684">
    <property type="term" value="F:damaged DNA binding"/>
    <property type="evidence" value="ECO:0007669"/>
    <property type="project" value="UniProtKB-UniRule"/>
</dbReference>
<dbReference type="GO" id="GO:0003697">
    <property type="term" value="F:single-stranded DNA binding"/>
    <property type="evidence" value="ECO:0007669"/>
    <property type="project" value="UniProtKB-UniRule"/>
</dbReference>
<dbReference type="GO" id="GO:0006310">
    <property type="term" value="P:DNA recombination"/>
    <property type="evidence" value="ECO:0007669"/>
    <property type="project" value="UniProtKB-UniRule"/>
</dbReference>
<dbReference type="GO" id="GO:0006281">
    <property type="term" value="P:DNA repair"/>
    <property type="evidence" value="ECO:0007669"/>
    <property type="project" value="UniProtKB-UniRule"/>
</dbReference>
<dbReference type="GO" id="GO:0009432">
    <property type="term" value="P:SOS response"/>
    <property type="evidence" value="ECO:0007669"/>
    <property type="project" value="UniProtKB-UniRule"/>
</dbReference>
<dbReference type="CDD" id="cd00983">
    <property type="entry name" value="RecA"/>
    <property type="match status" value="1"/>
</dbReference>
<dbReference type="FunFam" id="3.40.50.300:FF:000087">
    <property type="entry name" value="Recombinase RecA"/>
    <property type="match status" value="1"/>
</dbReference>
<dbReference type="Gene3D" id="3.40.50.300">
    <property type="entry name" value="P-loop containing nucleotide triphosphate hydrolases"/>
    <property type="match status" value="1"/>
</dbReference>
<dbReference type="HAMAP" id="MF_00268">
    <property type="entry name" value="RecA"/>
    <property type="match status" value="1"/>
</dbReference>
<dbReference type="InterPro" id="IPR003593">
    <property type="entry name" value="AAA+_ATPase"/>
</dbReference>
<dbReference type="InterPro" id="IPR013765">
    <property type="entry name" value="DNA_recomb/repair_RecA"/>
</dbReference>
<dbReference type="InterPro" id="IPR020584">
    <property type="entry name" value="DNA_recomb/repair_RecA_CS"/>
</dbReference>
<dbReference type="InterPro" id="IPR027417">
    <property type="entry name" value="P-loop_NTPase"/>
</dbReference>
<dbReference type="InterPro" id="IPR049261">
    <property type="entry name" value="RecA-like_C"/>
</dbReference>
<dbReference type="InterPro" id="IPR049428">
    <property type="entry name" value="RecA-like_N"/>
</dbReference>
<dbReference type="InterPro" id="IPR020588">
    <property type="entry name" value="RecA_ATP-bd"/>
</dbReference>
<dbReference type="InterPro" id="IPR023400">
    <property type="entry name" value="RecA_C_sf"/>
</dbReference>
<dbReference type="InterPro" id="IPR020587">
    <property type="entry name" value="RecA_monomer-monomer_interface"/>
</dbReference>
<dbReference type="NCBIfam" id="TIGR02012">
    <property type="entry name" value="tigrfam_recA"/>
    <property type="match status" value="1"/>
</dbReference>
<dbReference type="PANTHER" id="PTHR45900:SF1">
    <property type="entry name" value="MITOCHONDRIAL DNA REPAIR PROTEIN RECA HOMOLOG-RELATED"/>
    <property type="match status" value="1"/>
</dbReference>
<dbReference type="PANTHER" id="PTHR45900">
    <property type="entry name" value="RECA"/>
    <property type="match status" value="1"/>
</dbReference>
<dbReference type="Pfam" id="PF00154">
    <property type="entry name" value="RecA"/>
    <property type="match status" value="1"/>
</dbReference>
<dbReference type="Pfam" id="PF21096">
    <property type="entry name" value="RecA_C"/>
    <property type="match status" value="1"/>
</dbReference>
<dbReference type="PRINTS" id="PR00142">
    <property type="entry name" value="RECA"/>
</dbReference>
<dbReference type="SMART" id="SM00382">
    <property type="entry name" value="AAA"/>
    <property type="match status" value="1"/>
</dbReference>
<dbReference type="SUPFAM" id="SSF52540">
    <property type="entry name" value="P-loop containing nucleoside triphosphate hydrolases"/>
    <property type="match status" value="1"/>
</dbReference>
<dbReference type="SUPFAM" id="SSF54752">
    <property type="entry name" value="RecA protein, C-terminal domain"/>
    <property type="match status" value="1"/>
</dbReference>
<dbReference type="PROSITE" id="PS00321">
    <property type="entry name" value="RECA_1"/>
    <property type="match status" value="1"/>
</dbReference>
<dbReference type="PROSITE" id="PS50162">
    <property type="entry name" value="RECA_2"/>
    <property type="match status" value="1"/>
</dbReference>
<dbReference type="PROSITE" id="PS50163">
    <property type="entry name" value="RECA_3"/>
    <property type="match status" value="1"/>
</dbReference>
<accession>B0V6E0</accession>
<gene>
    <name evidence="1" type="primary">recA</name>
    <name type="ordered locus">ABAYE1590</name>
</gene>
<evidence type="ECO:0000255" key="1">
    <source>
        <dbReference type="HAMAP-Rule" id="MF_00268"/>
    </source>
</evidence>
<protein>
    <recommendedName>
        <fullName evidence="1">Protein RecA</fullName>
    </recommendedName>
    <alternativeName>
        <fullName evidence="1">Recombinase A</fullName>
    </alternativeName>
</protein>
<comment type="function">
    <text evidence="1">Can catalyze the hydrolysis of ATP in the presence of single-stranded DNA, the ATP-dependent uptake of single-stranded DNA by duplex DNA, and the ATP-dependent hybridization of homologous single-stranded DNAs. It interacts with LexA causing its activation and leading to its autocatalytic cleavage.</text>
</comment>
<comment type="subcellular location">
    <subcellularLocation>
        <location evidence="1">Cytoplasm</location>
    </subcellularLocation>
</comment>
<comment type="similarity">
    <text evidence="1">Belongs to the RecA family.</text>
</comment>
<sequence>MDENKSKALQAALSQIEKQFGKNTVMRLGDNTVQAVEAVSTGSLTLDIALGIGGLPKGRIIEIYGPESSGKTTMTLQAIAQCQKSGGTCAFIDAEHALDPQYARKLGVDIDNLLVSQPDNGEQALEIADMLVRSGAIDLIVVDSVAALTPKAEIEGEMGDSHMGLQARLMSQALRKITGNAKRSNCMVIFINQIRMKIGVMFGSPETTTGGNALKFYASVRLDIRRIGQVKEGDEIVGSETKVKVVKNKMAPPFKEAIFQILYGKGTNQLGELVDLAVQQDIVQKAGAWYSYQGNKIGQGKNNVIRYFEENTQIAEEIERNIREQLLTTGTNGAVQIEDEEEPDLLLES</sequence>
<organism>
    <name type="scientific">Acinetobacter baumannii (strain AYE)</name>
    <dbReference type="NCBI Taxonomy" id="509173"/>
    <lineage>
        <taxon>Bacteria</taxon>
        <taxon>Pseudomonadati</taxon>
        <taxon>Pseudomonadota</taxon>
        <taxon>Gammaproteobacteria</taxon>
        <taxon>Moraxellales</taxon>
        <taxon>Moraxellaceae</taxon>
        <taxon>Acinetobacter</taxon>
        <taxon>Acinetobacter calcoaceticus/baumannii complex</taxon>
    </lineage>
</organism>
<keyword id="KW-0067">ATP-binding</keyword>
<keyword id="KW-0963">Cytoplasm</keyword>
<keyword id="KW-0227">DNA damage</keyword>
<keyword id="KW-0233">DNA recombination</keyword>
<keyword id="KW-0234">DNA repair</keyword>
<keyword id="KW-0238">DNA-binding</keyword>
<keyword id="KW-0547">Nucleotide-binding</keyword>
<keyword id="KW-0742">SOS response</keyword>
<reference key="1">
    <citation type="journal article" date="2008" name="PLoS ONE">
        <title>Comparative analysis of Acinetobacters: three genomes for three lifestyles.</title>
        <authorList>
            <person name="Vallenet D."/>
            <person name="Nordmann P."/>
            <person name="Barbe V."/>
            <person name="Poirel L."/>
            <person name="Mangenot S."/>
            <person name="Bataille E."/>
            <person name="Dossat C."/>
            <person name="Gas S."/>
            <person name="Kreimeyer A."/>
            <person name="Lenoble P."/>
            <person name="Oztas S."/>
            <person name="Poulain J."/>
            <person name="Segurens B."/>
            <person name="Robert C."/>
            <person name="Abergel C."/>
            <person name="Claverie J.-M."/>
            <person name="Raoult D."/>
            <person name="Medigue C."/>
            <person name="Weissenbach J."/>
            <person name="Cruveiller S."/>
        </authorList>
    </citation>
    <scope>NUCLEOTIDE SEQUENCE [LARGE SCALE GENOMIC DNA]</scope>
    <source>
        <strain>AYE</strain>
    </source>
</reference>
<name>RECA_ACIBY</name>
<feature type="chain" id="PRO_1000114309" description="Protein RecA">
    <location>
        <begin position="1"/>
        <end position="349"/>
    </location>
</feature>
<feature type="binding site" evidence="1">
    <location>
        <begin position="65"/>
        <end position="72"/>
    </location>
    <ligand>
        <name>ATP</name>
        <dbReference type="ChEBI" id="CHEBI:30616"/>
    </ligand>
</feature>